<comment type="function">
    <text evidence="1">Catalyzes the phosphorylation of the position 2 hydroxy group of 4-diphosphocytidyl-2C-methyl-D-erythritol.</text>
</comment>
<comment type="catalytic activity">
    <reaction evidence="1">
        <text>4-CDP-2-C-methyl-D-erythritol + ATP = 4-CDP-2-C-methyl-D-erythritol 2-phosphate + ADP + H(+)</text>
        <dbReference type="Rhea" id="RHEA:18437"/>
        <dbReference type="ChEBI" id="CHEBI:15378"/>
        <dbReference type="ChEBI" id="CHEBI:30616"/>
        <dbReference type="ChEBI" id="CHEBI:57823"/>
        <dbReference type="ChEBI" id="CHEBI:57919"/>
        <dbReference type="ChEBI" id="CHEBI:456216"/>
        <dbReference type="EC" id="2.7.1.148"/>
    </reaction>
</comment>
<comment type="pathway">
    <text evidence="1">Isoprenoid biosynthesis; isopentenyl diphosphate biosynthesis via DXP pathway; isopentenyl diphosphate from 1-deoxy-D-xylulose 5-phosphate: step 3/6.</text>
</comment>
<comment type="subunit">
    <text evidence="1">Homodimer.</text>
</comment>
<comment type="similarity">
    <text evidence="1">Belongs to the GHMP kinase family. IspE subfamily.</text>
</comment>
<organism>
    <name type="scientific">Escherichia coli (strain SMS-3-5 / SECEC)</name>
    <dbReference type="NCBI Taxonomy" id="439855"/>
    <lineage>
        <taxon>Bacteria</taxon>
        <taxon>Pseudomonadati</taxon>
        <taxon>Pseudomonadota</taxon>
        <taxon>Gammaproteobacteria</taxon>
        <taxon>Enterobacterales</taxon>
        <taxon>Enterobacteriaceae</taxon>
        <taxon>Escherichia</taxon>
    </lineage>
</organism>
<evidence type="ECO:0000255" key="1">
    <source>
        <dbReference type="HAMAP-Rule" id="MF_00061"/>
    </source>
</evidence>
<name>ISPE_ECOSM</name>
<accession>B1LH92</accession>
<gene>
    <name evidence="1" type="primary">ispE</name>
    <name type="ordered locus">EcSMS35_1934</name>
</gene>
<dbReference type="EC" id="2.7.1.148" evidence="1"/>
<dbReference type="EMBL" id="CP000970">
    <property type="protein sequence ID" value="ACB16950.1"/>
    <property type="molecule type" value="Genomic_DNA"/>
</dbReference>
<dbReference type="RefSeq" id="WP_001260310.1">
    <property type="nucleotide sequence ID" value="NC_010498.1"/>
</dbReference>
<dbReference type="SMR" id="B1LH92"/>
<dbReference type="KEGG" id="ecm:EcSMS35_1934"/>
<dbReference type="HOGENOM" id="CLU_053057_3_0_6"/>
<dbReference type="UniPathway" id="UPA00056">
    <property type="reaction ID" value="UER00094"/>
</dbReference>
<dbReference type="Proteomes" id="UP000007011">
    <property type="component" value="Chromosome"/>
</dbReference>
<dbReference type="GO" id="GO:0050515">
    <property type="term" value="F:4-(cytidine 5'-diphospho)-2-C-methyl-D-erythritol kinase activity"/>
    <property type="evidence" value="ECO:0007669"/>
    <property type="project" value="UniProtKB-UniRule"/>
</dbReference>
<dbReference type="GO" id="GO:0005524">
    <property type="term" value="F:ATP binding"/>
    <property type="evidence" value="ECO:0007669"/>
    <property type="project" value="UniProtKB-UniRule"/>
</dbReference>
<dbReference type="GO" id="GO:0019288">
    <property type="term" value="P:isopentenyl diphosphate biosynthetic process, methylerythritol 4-phosphate pathway"/>
    <property type="evidence" value="ECO:0007669"/>
    <property type="project" value="UniProtKB-UniRule"/>
</dbReference>
<dbReference type="GO" id="GO:0016114">
    <property type="term" value="P:terpenoid biosynthetic process"/>
    <property type="evidence" value="ECO:0007669"/>
    <property type="project" value="InterPro"/>
</dbReference>
<dbReference type="FunFam" id="3.30.230.10:FF:000022">
    <property type="entry name" value="4-diphosphocytidyl-2-C-methyl-D-erythritol kinase"/>
    <property type="match status" value="1"/>
</dbReference>
<dbReference type="FunFam" id="3.30.70.890:FF:000004">
    <property type="entry name" value="4-diphosphocytidyl-2-C-methyl-D-erythritol kinase"/>
    <property type="match status" value="1"/>
</dbReference>
<dbReference type="Gene3D" id="3.30.230.10">
    <property type="match status" value="1"/>
</dbReference>
<dbReference type="Gene3D" id="3.30.70.890">
    <property type="entry name" value="GHMP kinase, C-terminal domain"/>
    <property type="match status" value="1"/>
</dbReference>
<dbReference type="HAMAP" id="MF_00061">
    <property type="entry name" value="IspE"/>
    <property type="match status" value="1"/>
</dbReference>
<dbReference type="InterPro" id="IPR013750">
    <property type="entry name" value="GHMP_kinase_C_dom"/>
</dbReference>
<dbReference type="InterPro" id="IPR036554">
    <property type="entry name" value="GHMP_kinase_C_sf"/>
</dbReference>
<dbReference type="InterPro" id="IPR006204">
    <property type="entry name" value="GHMP_kinase_N_dom"/>
</dbReference>
<dbReference type="InterPro" id="IPR004424">
    <property type="entry name" value="IspE"/>
</dbReference>
<dbReference type="InterPro" id="IPR020568">
    <property type="entry name" value="Ribosomal_Su5_D2-typ_SF"/>
</dbReference>
<dbReference type="InterPro" id="IPR014721">
    <property type="entry name" value="Ribsml_uS5_D2-typ_fold_subgr"/>
</dbReference>
<dbReference type="NCBIfam" id="TIGR00154">
    <property type="entry name" value="ispE"/>
    <property type="match status" value="1"/>
</dbReference>
<dbReference type="PANTHER" id="PTHR43527">
    <property type="entry name" value="4-DIPHOSPHOCYTIDYL-2-C-METHYL-D-ERYTHRITOL KINASE, CHLOROPLASTIC"/>
    <property type="match status" value="1"/>
</dbReference>
<dbReference type="PANTHER" id="PTHR43527:SF2">
    <property type="entry name" value="4-DIPHOSPHOCYTIDYL-2-C-METHYL-D-ERYTHRITOL KINASE, CHLOROPLASTIC"/>
    <property type="match status" value="1"/>
</dbReference>
<dbReference type="Pfam" id="PF08544">
    <property type="entry name" value="GHMP_kinases_C"/>
    <property type="match status" value="1"/>
</dbReference>
<dbReference type="Pfam" id="PF00288">
    <property type="entry name" value="GHMP_kinases_N"/>
    <property type="match status" value="1"/>
</dbReference>
<dbReference type="PIRSF" id="PIRSF010376">
    <property type="entry name" value="IspE"/>
    <property type="match status" value="1"/>
</dbReference>
<dbReference type="SUPFAM" id="SSF55060">
    <property type="entry name" value="GHMP Kinase, C-terminal domain"/>
    <property type="match status" value="1"/>
</dbReference>
<dbReference type="SUPFAM" id="SSF54211">
    <property type="entry name" value="Ribosomal protein S5 domain 2-like"/>
    <property type="match status" value="1"/>
</dbReference>
<proteinExistence type="inferred from homology"/>
<feature type="chain" id="PRO_1000116930" description="4-diphosphocytidyl-2-C-methyl-D-erythritol kinase">
    <location>
        <begin position="1"/>
        <end position="283"/>
    </location>
</feature>
<feature type="active site" evidence="1">
    <location>
        <position position="10"/>
    </location>
</feature>
<feature type="active site" evidence="1">
    <location>
        <position position="141"/>
    </location>
</feature>
<feature type="binding site" evidence="1">
    <location>
        <begin position="99"/>
        <end position="109"/>
    </location>
    <ligand>
        <name>ATP</name>
        <dbReference type="ChEBI" id="CHEBI:30616"/>
    </ligand>
</feature>
<keyword id="KW-0067">ATP-binding</keyword>
<keyword id="KW-0414">Isoprene biosynthesis</keyword>
<keyword id="KW-0418">Kinase</keyword>
<keyword id="KW-0547">Nucleotide-binding</keyword>
<keyword id="KW-0808">Transferase</keyword>
<protein>
    <recommendedName>
        <fullName evidence="1">4-diphosphocytidyl-2-C-methyl-D-erythritol kinase</fullName>
        <shortName evidence="1">CMK</shortName>
        <ecNumber evidence="1">2.7.1.148</ecNumber>
    </recommendedName>
    <alternativeName>
        <fullName evidence="1">4-(cytidine-5'-diphospho)-2-C-methyl-D-erythritol kinase</fullName>
    </alternativeName>
</protein>
<reference key="1">
    <citation type="journal article" date="2008" name="J. Bacteriol.">
        <title>Insights into the environmental resistance gene pool from the genome sequence of the multidrug-resistant environmental isolate Escherichia coli SMS-3-5.</title>
        <authorList>
            <person name="Fricke W.F."/>
            <person name="Wright M.S."/>
            <person name="Lindell A.H."/>
            <person name="Harkins D.M."/>
            <person name="Baker-Austin C."/>
            <person name="Ravel J."/>
            <person name="Stepanauskas R."/>
        </authorList>
    </citation>
    <scope>NUCLEOTIDE SEQUENCE [LARGE SCALE GENOMIC DNA]</scope>
    <source>
        <strain>SMS-3-5 / SECEC</strain>
    </source>
</reference>
<sequence length="283" mass="30980">MRTQWPSPAKLNLFLYITGQRADGYHTLQTLFQFLDYGDTINIELRDDGDIRLLTPVEGVEHEDNLIVRAARLLMKTAADSGRLPTGSGANISIDKRLPMGGGLGGGSSNAATVLVALNHLWQCGLSMDELAEMGLTLGADVPVFVRGHAAFAEGVGEILTPVDPPEKWYLVAHPGVSIPTPVIFKDPELPRNTPKRSIETLLKCEFSNDCEVIARKRFREVDAVLSWLLEYAPSRLTGTGACVFAEFDTESEARQVLEQAPEWLNGFVAKGVNLSPLHRAML</sequence>